<gene>
    <name evidence="1" type="primary">rps27ae</name>
    <name type="ordered locus">CENSYa_0425</name>
</gene>
<dbReference type="EMBL" id="DP000238">
    <property type="protein sequence ID" value="ABK77060.1"/>
    <property type="molecule type" value="Genomic_DNA"/>
</dbReference>
<dbReference type="SMR" id="A0RUP3"/>
<dbReference type="STRING" id="414004.CENSYa_0425"/>
<dbReference type="EnsemblBacteria" id="ABK77060">
    <property type="protein sequence ID" value="ABK77060"/>
    <property type="gene ID" value="CENSYa_0425"/>
</dbReference>
<dbReference type="KEGG" id="csy:CENSYa_0425"/>
<dbReference type="HOGENOM" id="CLU_179743_2_0_2"/>
<dbReference type="Proteomes" id="UP000000758">
    <property type="component" value="Chromosome"/>
</dbReference>
<dbReference type="GO" id="GO:1990904">
    <property type="term" value="C:ribonucleoprotein complex"/>
    <property type="evidence" value="ECO:0007669"/>
    <property type="project" value="UniProtKB-KW"/>
</dbReference>
<dbReference type="GO" id="GO:0005840">
    <property type="term" value="C:ribosome"/>
    <property type="evidence" value="ECO:0007669"/>
    <property type="project" value="UniProtKB-KW"/>
</dbReference>
<dbReference type="GO" id="GO:0003735">
    <property type="term" value="F:structural constituent of ribosome"/>
    <property type="evidence" value="ECO:0007669"/>
    <property type="project" value="InterPro"/>
</dbReference>
<dbReference type="GO" id="GO:0008270">
    <property type="term" value="F:zinc ion binding"/>
    <property type="evidence" value="ECO:0007669"/>
    <property type="project" value="UniProtKB-UniRule"/>
</dbReference>
<dbReference type="GO" id="GO:0006412">
    <property type="term" value="P:translation"/>
    <property type="evidence" value="ECO:0007669"/>
    <property type="project" value="UniProtKB-UniRule"/>
</dbReference>
<dbReference type="Gene3D" id="6.20.50.180">
    <property type="match status" value="1"/>
</dbReference>
<dbReference type="HAMAP" id="MF_00777">
    <property type="entry name" value="Ribosomal_eS31"/>
    <property type="match status" value="1"/>
</dbReference>
<dbReference type="InterPro" id="IPR002906">
    <property type="entry name" value="Ribosomal_eS31"/>
</dbReference>
<dbReference type="InterPro" id="IPR022845">
    <property type="entry name" value="Ribosomal_eS31_arc"/>
</dbReference>
<dbReference type="InterPro" id="IPR011332">
    <property type="entry name" value="Ribosomal_zn-bd"/>
</dbReference>
<dbReference type="NCBIfam" id="NF001669">
    <property type="entry name" value="PRK00432.1"/>
    <property type="match status" value="1"/>
</dbReference>
<dbReference type="Pfam" id="PF01599">
    <property type="entry name" value="Ribosomal_S27"/>
    <property type="match status" value="1"/>
</dbReference>
<dbReference type="SMART" id="SM01402">
    <property type="entry name" value="Ribosomal_S27"/>
    <property type="match status" value="1"/>
</dbReference>
<dbReference type="SUPFAM" id="SSF57829">
    <property type="entry name" value="Zn-binding ribosomal proteins"/>
    <property type="match status" value="1"/>
</dbReference>
<sequence>MADKKEGGVHRFYKIEDGKTVKLRHICSRCGKGFFMAQHKDRRSCGKCGLTEFNQ</sequence>
<protein>
    <recommendedName>
        <fullName evidence="1">Small ribosomal subunit protein eS31</fullName>
    </recommendedName>
    <alternativeName>
        <fullName evidence="2">30S ribosomal protein S27ae</fullName>
    </alternativeName>
</protein>
<comment type="cofactor">
    <cofactor evidence="1">
        <name>Zn(2+)</name>
        <dbReference type="ChEBI" id="CHEBI:29105"/>
    </cofactor>
    <text evidence="1">Binds 1 zinc ion per subunit.</text>
</comment>
<comment type="subunit">
    <text evidence="1">Part of the 30S ribosomal subunit.</text>
</comment>
<comment type="similarity">
    <text evidence="1">Belongs to the eukaryotic ribosomal protein eS31 family.</text>
</comment>
<proteinExistence type="inferred from homology"/>
<feature type="chain" id="PRO_1000072836" description="Small ribosomal subunit protein eS31">
    <location>
        <begin position="1"/>
        <end position="55"/>
    </location>
</feature>
<feature type="zinc finger region" description="C4-type" evidence="1">
    <location>
        <begin position="27"/>
        <end position="48"/>
    </location>
</feature>
<feature type="binding site" evidence="1">
    <location>
        <position position="27"/>
    </location>
    <ligand>
        <name>Zn(2+)</name>
        <dbReference type="ChEBI" id="CHEBI:29105"/>
    </ligand>
</feature>
<feature type="binding site" evidence="1">
    <location>
        <position position="30"/>
    </location>
    <ligand>
        <name>Zn(2+)</name>
        <dbReference type="ChEBI" id="CHEBI:29105"/>
    </ligand>
</feature>
<feature type="binding site" evidence="1">
    <location>
        <position position="45"/>
    </location>
    <ligand>
        <name>Zn(2+)</name>
        <dbReference type="ChEBI" id="CHEBI:29105"/>
    </ligand>
</feature>
<feature type="binding site" evidence="1">
    <location>
        <position position="48"/>
    </location>
    <ligand>
        <name>Zn(2+)</name>
        <dbReference type="ChEBI" id="CHEBI:29105"/>
    </ligand>
</feature>
<reference key="1">
    <citation type="journal article" date="2006" name="Proc. Natl. Acad. Sci. U.S.A.">
        <title>Genomic analysis of the uncultivated marine crenarchaeote Cenarchaeum symbiosum.</title>
        <authorList>
            <person name="Hallam S.J."/>
            <person name="Konstantinidis K.T."/>
            <person name="Putnam N."/>
            <person name="Schleper C."/>
            <person name="Watanabe Y."/>
            <person name="Sugahara J."/>
            <person name="Preston C."/>
            <person name="de la Torre J."/>
            <person name="Richardson P.M."/>
            <person name="DeLong E.F."/>
        </authorList>
    </citation>
    <scope>NUCLEOTIDE SEQUENCE [LARGE SCALE GENOMIC DNA]</scope>
    <source>
        <strain>A</strain>
    </source>
</reference>
<accession>A0RUP3</accession>
<name>RS27A_CENSY</name>
<evidence type="ECO:0000255" key="1">
    <source>
        <dbReference type="HAMAP-Rule" id="MF_00777"/>
    </source>
</evidence>
<evidence type="ECO:0000305" key="2"/>
<keyword id="KW-0479">Metal-binding</keyword>
<keyword id="KW-1185">Reference proteome</keyword>
<keyword id="KW-0687">Ribonucleoprotein</keyword>
<keyword id="KW-0689">Ribosomal protein</keyword>
<keyword id="KW-0862">Zinc</keyword>
<keyword id="KW-0863">Zinc-finger</keyword>
<organism>
    <name type="scientific">Cenarchaeum symbiosum (strain A)</name>
    <dbReference type="NCBI Taxonomy" id="414004"/>
    <lineage>
        <taxon>Archaea</taxon>
        <taxon>Nitrososphaerota</taxon>
        <taxon>Candidatus Cenarchaeales</taxon>
        <taxon>Candidatus Cenarchaeaceae</taxon>
        <taxon>Candidatus Cenarchaeum</taxon>
    </lineage>
</organism>